<name>YQGF_METSB</name>
<organism>
    <name type="scientific">Methylocella silvestris (strain DSM 15510 / CIP 108128 / LMG 27833 / NCIMB 13906 / BL2)</name>
    <dbReference type="NCBI Taxonomy" id="395965"/>
    <lineage>
        <taxon>Bacteria</taxon>
        <taxon>Pseudomonadati</taxon>
        <taxon>Pseudomonadota</taxon>
        <taxon>Alphaproteobacteria</taxon>
        <taxon>Hyphomicrobiales</taxon>
        <taxon>Beijerinckiaceae</taxon>
        <taxon>Methylocella</taxon>
    </lineage>
</organism>
<protein>
    <recommendedName>
        <fullName evidence="1">Putative pre-16S rRNA nuclease</fullName>
        <ecNumber evidence="1">3.1.-.-</ecNumber>
    </recommendedName>
</protein>
<comment type="function">
    <text evidence="1">Could be a nuclease involved in processing of the 5'-end of pre-16S rRNA.</text>
</comment>
<comment type="subcellular location">
    <subcellularLocation>
        <location evidence="1">Cytoplasm</location>
    </subcellularLocation>
</comment>
<comment type="similarity">
    <text evidence="1">Belongs to the YqgF nuclease family.</text>
</comment>
<reference key="1">
    <citation type="journal article" date="2010" name="J. Bacteriol.">
        <title>Complete genome sequence of the aerobic facultative methanotroph Methylocella silvestris BL2.</title>
        <authorList>
            <person name="Chen Y."/>
            <person name="Crombie A."/>
            <person name="Rahman M.T."/>
            <person name="Dedysh S.N."/>
            <person name="Liesack W."/>
            <person name="Stott M.B."/>
            <person name="Alam M."/>
            <person name="Theisen A.R."/>
            <person name="Murrell J.C."/>
            <person name="Dunfield P.F."/>
        </authorList>
    </citation>
    <scope>NUCLEOTIDE SEQUENCE [LARGE SCALE GENOMIC DNA]</scope>
    <source>
        <strain>DSM 15510 / CIP 108128 / LMG 27833 / NCIMB 13906 / BL2</strain>
    </source>
</reference>
<gene>
    <name type="ordered locus">Msil_0742</name>
</gene>
<sequence>MAAEILEVADLPARVGPRQRLIGIDLGTKTIGLALSDVERRIATPLETIQRIKFSKDAVRLIELAEKFDAGALIIGLPLNMDGSQGPRVQATRAFVRSLSALVSKPFVYWDERLSTAAVTRSLIDQDVSRLKRAEVVDKMAAAYILQGVLDRLRRIEADAV</sequence>
<keyword id="KW-0963">Cytoplasm</keyword>
<keyword id="KW-0378">Hydrolase</keyword>
<keyword id="KW-0540">Nuclease</keyword>
<keyword id="KW-1185">Reference proteome</keyword>
<keyword id="KW-0690">Ribosome biogenesis</keyword>
<feature type="chain" id="PRO_1000147484" description="Putative pre-16S rRNA nuclease">
    <location>
        <begin position="1"/>
        <end position="161"/>
    </location>
</feature>
<accession>B8EPC5</accession>
<proteinExistence type="inferred from homology"/>
<evidence type="ECO:0000255" key="1">
    <source>
        <dbReference type="HAMAP-Rule" id="MF_00651"/>
    </source>
</evidence>
<dbReference type="EC" id="3.1.-.-" evidence="1"/>
<dbReference type="EMBL" id="CP001280">
    <property type="protein sequence ID" value="ACK49713.1"/>
    <property type="molecule type" value="Genomic_DNA"/>
</dbReference>
<dbReference type="RefSeq" id="WP_012589783.1">
    <property type="nucleotide sequence ID" value="NC_011666.1"/>
</dbReference>
<dbReference type="SMR" id="B8EPC5"/>
<dbReference type="STRING" id="395965.Msil_0742"/>
<dbReference type="KEGG" id="msl:Msil_0742"/>
<dbReference type="eggNOG" id="COG0816">
    <property type="taxonomic scope" value="Bacteria"/>
</dbReference>
<dbReference type="HOGENOM" id="CLU_098240_1_1_5"/>
<dbReference type="OrthoDB" id="9796140at2"/>
<dbReference type="Proteomes" id="UP000002257">
    <property type="component" value="Chromosome"/>
</dbReference>
<dbReference type="GO" id="GO:0005829">
    <property type="term" value="C:cytosol"/>
    <property type="evidence" value="ECO:0007669"/>
    <property type="project" value="TreeGrafter"/>
</dbReference>
<dbReference type="GO" id="GO:0004518">
    <property type="term" value="F:nuclease activity"/>
    <property type="evidence" value="ECO:0007669"/>
    <property type="project" value="UniProtKB-KW"/>
</dbReference>
<dbReference type="GO" id="GO:0000967">
    <property type="term" value="P:rRNA 5'-end processing"/>
    <property type="evidence" value="ECO:0007669"/>
    <property type="project" value="UniProtKB-UniRule"/>
</dbReference>
<dbReference type="CDD" id="cd16964">
    <property type="entry name" value="YqgF"/>
    <property type="match status" value="1"/>
</dbReference>
<dbReference type="Gene3D" id="3.30.420.140">
    <property type="entry name" value="YqgF/RNase H-like domain"/>
    <property type="match status" value="1"/>
</dbReference>
<dbReference type="HAMAP" id="MF_00651">
    <property type="entry name" value="Nuclease_YqgF"/>
    <property type="match status" value="1"/>
</dbReference>
<dbReference type="InterPro" id="IPR012337">
    <property type="entry name" value="RNaseH-like_sf"/>
</dbReference>
<dbReference type="InterPro" id="IPR005227">
    <property type="entry name" value="YqgF"/>
</dbReference>
<dbReference type="InterPro" id="IPR006641">
    <property type="entry name" value="YqgF/RNaseH-like_dom"/>
</dbReference>
<dbReference type="InterPro" id="IPR037027">
    <property type="entry name" value="YqgF/RNaseH-like_dom_sf"/>
</dbReference>
<dbReference type="NCBIfam" id="TIGR00250">
    <property type="entry name" value="RNAse_H_YqgF"/>
    <property type="match status" value="1"/>
</dbReference>
<dbReference type="PANTHER" id="PTHR33317">
    <property type="entry name" value="POLYNUCLEOTIDYL TRANSFERASE, RIBONUCLEASE H-LIKE SUPERFAMILY PROTEIN"/>
    <property type="match status" value="1"/>
</dbReference>
<dbReference type="PANTHER" id="PTHR33317:SF4">
    <property type="entry name" value="POLYNUCLEOTIDYL TRANSFERASE, RIBONUCLEASE H-LIKE SUPERFAMILY PROTEIN"/>
    <property type="match status" value="1"/>
</dbReference>
<dbReference type="Pfam" id="PF03652">
    <property type="entry name" value="RuvX"/>
    <property type="match status" value="1"/>
</dbReference>
<dbReference type="SMART" id="SM00732">
    <property type="entry name" value="YqgFc"/>
    <property type="match status" value="1"/>
</dbReference>
<dbReference type="SUPFAM" id="SSF53098">
    <property type="entry name" value="Ribonuclease H-like"/>
    <property type="match status" value="1"/>
</dbReference>